<name>VBHA_BARSR</name>
<reference key="1">
    <citation type="journal article" date="2011" name="PLoS Genet.">
        <title>Parallel evolution of a type IV secretion system in radiating lineages of the host-restricted bacterial pathogen Bartonella.</title>
        <authorList>
            <person name="Engel P."/>
            <person name="Salzburger W."/>
            <person name="Liesch M."/>
            <person name="Chang C.C."/>
            <person name="Maruyama S."/>
            <person name="Lanz C."/>
            <person name="Calteau A."/>
            <person name="Lajus A."/>
            <person name="Medigue C."/>
            <person name="Schuster S.C."/>
            <person name="Dehio C."/>
        </authorList>
    </citation>
    <scope>NUCLEOTIDE SEQUENCE [LARGE SCALE GENOMIC DNA]</scope>
    <source>
        <strain>DSM 13525 / NCTC 13165 / R1</strain>
    </source>
</reference>
<reference key="2">
    <citation type="journal article" date="2012" name="Nature">
        <title>Adenylylation control by intra- or intermolecular active-site obstruction in Fic proteins.</title>
        <authorList>
            <person name="Engel P."/>
            <person name="Goepfert A."/>
            <person name="Stanger F.V."/>
            <person name="Harms A."/>
            <person name="Schmidt A."/>
            <person name="Schirmer T."/>
            <person name="Dehio C."/>
        </authorList>
    </citation>
    <scope>X-RAY CRYSTALLOGRAPHY (1.5 ANGSTROMS) OF 2-61 IN COMPLEX WITH VBHT</scope>
    <scope>FUNCTION</scope>
    <scope>INTERACTION WITH VBHT</scope>
    <scope>MUTAGENESIS OF GLU-24</scope>
    <source>
        <strain>DSM 13525 / NCTC 13165 / R1</strain>
    </source>
</reference>
<evidence type="ECO:0000269" key="1">
    <source>
    </source>
</evidence>
<evidence type="ECO:0000305" key="2"/>
<evidence type="ECO:0007829" key="3">
    <source>
        <dbReference type="PDB" id="3SHG"/>
    </source>
</evidence>
<protein>
    <recommendedName>
        <fullName>Antitoxin VbhA</fullName>
    </recommendedName>
</protein>
<keyword id="KW-0002">3D-structure</keyword>
<keyword id="KW-0067">ATP-binding</keyword>
<keyword id="KW-0547">Nucleotide-binding</keyword>
<keyword id="KW-1277">Toxin-antitoxin system</keyword>
<sequence length="62" mass="7270">MLSEEEIEYRRRDARNALASQRLEGLEPDPQVVAQMERVVVGELETSDVIKDLMERIKREEI</sequence>
<accession>E6Z0R4</accession>
<gene>
    <name type="ORF">B11C_100027</name>
</gene>
<proteinExistence type="evidence at protein level"/>
<comment type="function">
    <text evidence="1">Antitoxin component of type II toxin-antitoxin (TA) system VbhT-VbhA. Acts by inhibiting the adenylyltransferase activity of VbhT; competes with ATP-binding and prevents productive ATP-binding to VbhT.</text>
</comment>
<comment type="subunit">
    <text evidence="1">Interacts with VbhT.</text>
</comment>
<comment type="interaction">
    <interactant intactId="EBI-15965363">
        <id>E6Z0R4</id>
    </interactant>
    <interactant intactId="EBI-15965345">
        <id>E6Z0R3</id>
        <label>vbhT</label>
    </interactant>
    <organismsDiffer>false</organismsDiffer>
    <experiments>2</experiments>
</comment>
<organism>
    <name type="scientific">Bartonella schoenbuchensis (strain DSM 13525 / NCTC 13165 / R1)</name>
    <dbReference type="NCBI Taxonomy" id="687861"/>
    <lineage>
        <taxon>Bacteria</taxon>
        <taxon>Pseudomonadati</taxon>
        <taxon>Pseudomonadota</taxon>
        <taxon>Alphaproteobacteria</taxon>
        <taxon>Hyphomicrobiales</taxon>
        <taxon>Bartonellaceae</taxon>
        <taxon>Bartonella</taxon>
    </lineage>
</organism>
<dbReference type="EMBL" id="FN645515">
    <property type="protein sequence ID" value="CBI82702.1"/>
    <property type="molecule type" value="Genomic_DNA"/>
</dbReference>
<dbReference type="RefSeq" id="WP_078690388.1">
    <property type="nucleotide sequence ID" value="NZ_CP019790.1"/>
</dbReference>
<dbReference type="PDB" id="3SHG">
    <property type="method" value="X-ray"/>
    <property type="resolution" value="1.50 A"/>
    <property type="chains" value="B=2-61"/>
</dbReference>
<dbReference type="PDB" id="3ZC7">
    <property type="method" value="X-ray"/>
    <property type="resolution" value="2.10 A"/>
    <property type="chains" value="B=2-62"/>
</dbReference>
<dbReference type="PDB" id="3ZCB">
    <property type="method" value="X-ray"/>
    <property type="resolution" value="1.94 A"/>
    <property type="chains" value="B=1-62"/>
</dbReference>
<dbReference type="PDBsum" id="3SHG"/>
<dbReference type="PDBsum" id="3ZC7"/>
<dbReference type="PDBsum" id="3ZCB"/>
<dbReference type="SMR" id="E6Z0R4"/>
<dbReference type="DIP" id="DIP-60137N"/>
<dbReference type="IntAct" id="E6Z0R4">
    <property type="interactions" value="1"/>
</dbReference>
<dbReference type="GO" id="GO:0005524">
    <property type="term" value="F:ATP binding"/>
    <property type="evidence" value="ECO:0007669"/>
    <property type="project" value="UniProtKB-KW"/>
</dbReference>
<dbReference type="GO" id="GO:1900723">
    <property type="term" value="P:negative regulation of protein adenylylation"/>
    <property type="evidence" value="ECO:0000314"/>
    <property type="project" value="UniProtKB"/>
</dbReference>
<dbReference type="CDD" id="cd11586">
    <property type="entry name" value="VbhA_like"/>
    <property type="match status" value="1"/>
</dbReference>
<dbReference type="Gene3D" id="1.10.8.1050">
    <property type="entry name" value="Antitoxin VbhA-like"/>
    <property type="match status" value="1"/>
</dbReference>
<dbReference type="InterPro" id="IPR041535">
    <property type="entry name" value="VbhA"/>
</dbReference>
<dbReference type="InterPro" id="IPR033788">
    <property type="entry name" value="VbhA-like"/>
</dbReference>
<dbReference type="InterPro" id="IPR043038">
    <property type="entry name" value="VbhA_sf"/>
</dbReference>
<dbReference type="Pfam" id="PF18495">
    <property type="entry name" value="VbhA"/>
    <property type="match status" value="1"/>
</dbReference>
<feature type="chain" id="PRO_0000417550" description="Antitoxin VbhA">
    <location>
        <begin position="1"/>
        <end position="62"/>
    </location>
</feature>
<feature type="short sequence motif" description="Inhibitory (S/T)XXXE(G/N) motif">
    <location>
        <begin position="20"/>
        <end position="25"/>
    </location>
</feature>
<feature type="binding site" evidence="2">
    <location>
        <position position="24"/>
    </location>
    <ligand>
        <name>ATP</name>
        <dbReference type="ChEBI" id="CHEBI:30616"/>
    </ligand>
</feature>
<feature type="mutagenesis site" description="Loss of antitoxin activity when transfected into E.coli cells." evidence="1">
    <original>E</original>
    <variation>G</variation>
    <location>
        <position position="24"/>
    </location>
</feature>
<feature type="helix" evidence="3">
    <location>
        <begin position="4"/>
        <end position="22"/>
    </location>
</feature>
<feature type="turn" evidence="3">
    <location>
        <begin position="23"/>
        <end position="25"/>
    </location>
</feature>
<feature type="helix" evidence="3">
    <location>
        <begin position="30"/>
        <end position="40"/>
    </location>
</feature>
<feature type="helix" evidence="3">
    <location>
        <begin position="46"/>
        <end position="58"/>
    </location>
</feature>